<accession>A5VYG4</accession>
<protein>
    <recommendedName>
        <fullName evidence="1">Glutamyl-tRNA reductase</fullName>
        <shortName evidence="1">GluTR</shortName>
        <ecNumber evidence="1">1.2.1.70</ecNumber>
    </recommendedName>
</protein>
<gene>
    <name evidence="1" type="primary">hemA</name>
    <name type="ordered locus">Pput_0760</name>
</gene>
<proteinExistence type="inferred from homology"/>
<dbReference type="EC" id="1.2.1.70" evidence="1"/>
<dbReference type="EMBL" id="CP000712">
    <property type="protein sequence ID" value="ABQ76924.1"/>
    <property type="molecule type" value="Genomic_DNA"/>
</dbReference>
<dbReference type="SMR" id="A5VYG4"/>
<dbReference type="KEGG" id="ppf:Pput_0760"/>
<dbReference type="eggNOG" id="COG0373">
    <property type="taxonomic scope" value="Bacteria"/>
</dbReference>
<dbReference type="HOGENOM" id="CLU_035113_2_2_6"/>
<dbReference type="UniPathway" id="UPA00251">
    <property type="reaction ID" value="UER00316"/>
</dbReference>
<dbReference type="GO" id="GO:0008883">
    <property type="term" value="F:glutamyl-tRNA reductase activity"/>
    <property type="evidence" value="ECO:0007669"/>
    <property type="project" value="UniProtKB-UniRule"/>
</dbReference>
<dbReference type="GO" id="GO:0050661">
    <property type="term" value="F:NADP binding"/>
    <property type="evidence" value="ECO:0007669"/>
    <property type="project" value="InterPro"/>
</dbReference>
<dbReference type="GO" id="GO:0019353">
    <property type="term" value="P:protoporphyrinogen IX biosynthetic process from glutamate"/>
    <property type="evidence" value="ECO:0007669"/>
    <property type="project" value="TreeGrafter"/>
</dbReference>
<dbReference type="CDD" id="cd05213">
    <property type="entry name" value="NAD_bind_Glutamyl_tRNA_reduct"/>
    <property type="match status" value="1"/>
</dbReference>
<dbReference type="FunFam" id="3.30.460.30:FF:000001">
    <property type="entry name" value="Glutamyl-tRNA reductase"/>
    <property type="match status" value="1"/>
</dbReference>
<dbReference type="FunFam" id="3.40.50.720:FF:000031">
    <property type="entry name" value="Glutamyl-tRNA reductase"/>
    <property type="match status" value="1"/>
</dbReference>
<dbReference type="Gene3D" id="3.30.460.30">
    <property type="entry name" value="Glutamyl-tRNA reductase, N-terminal domain"/>
    <property type="match status" value="1"/>
</dbReference>
<dbReference type="Gene3D" id="3.40.50.720">
    <property type="entry name" value="NAD(P)-binding Rossmann-like Domain"/>
    <property type="match status" value="1"/>
</dbReference>
<dbReference type="HAMAP" id="MF_00087">
    <property type="entry name" value="Glu_tRNA_reductase"/>
    <property type="match status" value="1"/>
</dbReference>
<dbReference type="InterPro" id="IPR000343">
    <property type="entry name" value="4pyrrol_synth_GluRdtase"/>
</dbReference>
<dbReference type="InterPro" id="IPR015896">
    <property type="entry name" value="4pyrrol_synth_GluRdtase_dimer"/>
</dbReference>
<dbReference type="InterPro" id="IPR015895">
    <property type="entry name" value="4pyrrol_synth_GluRdtase_N"/>
</dbReference>
<dbReference type="InterPro" id="IPR018214">
    <property type="entry name" value="GluRdtase_CS"/>
</dbReference>
<dbReference type="InterPro" id="IPR036453">
    <property type="entry name" value="GluRdtase_dimer_dom_sf"/>
</dbReference>
<dbReference type="InterPro" id="IPR036343">
    <property type="entry name" value="GluRdtase_N_sf"/>
</dbReference>
<dbReference type="InterPro" id="IPR036291">
    <property type="entry name" value="NAD(P)-bd_dom_sf"/>
</dbReference>
<dbReference type="InterPro" id="IPR006151">
    <property type="entry name" value="Shikm_DH/Glu-tRNA_Rdtase"/>
</dbReference>
<dbReference type="NCBIfam" id="TIGR01035">
    <property type="entry name" value="hemA"/>
    <property type="match status" value="1"/>
</dbReference>
<dbReference type="PANTHER" id="PTHR43013">
    <property type="entry name" value="GLUTAMYL-TRNA REDUCTASE"/>
    <property type="match status" value="1"/>
</dbReference>
<dbReference type="PANTHER" id="PTHR43013:SF1">
    <property type="entry name" value="GLUTAMYL-TRNA REDUCTASE"/>
    <property type="match status" value="1"/>
</dbReference>
<dbReference type="Pfam" id="PF00745">
    <property type="entry name" value="GlutR_dimer"/>
    <property type="match status" value="1"/>
</dbReference>
<dbReference type="Pfam" id="PF05201">
    <property type="entry name" value="GlutR_N"/>
    <property type="match status" value="1"/>
</dbReference>
<dbReference type="Pfam" id="PF01488">
    <property type="entry name" value="Shikimate_DH"/>
    <property type="match status" value="1"/>
</dbReference>
<dbReference type="PIRSF" id="PIRSF000445">
    <property type="entry name" value="4pyrrol_synth_GluRdtase"/>
    <property type="match status" value="1"/>
</dbReference>
<dbReference type="SUPFAM" id="SSF69742">
    <property type="entry name" value="Glutamyl tRNA-reductase catalytic, N-terminal domain"/>
    <property type="match status" value="1"/>
</dbReference>
<dbReference type="SUPFAM" id="SSF69075">
    <property type="entry name" value="Glutamyl tRNA-reductase dimerization domain"/>
    <property type="match status" value="1"/>
</dbReference>
<dbReference type="SUPFAM" id="SSF51735">
    <property type="entry name" value="NAD(P)-binding Rossmann-fold domains"/>
    <property type="match status" value="1"/>
</dbReference>
<dbReference type="PROSITE" id="PS00747">
    <property type="entry name" value="GLUTR"/>
    <property type="match status" value="1"/>
</dbReference>
<name>HEM1_PSEP1</name>
<feature type="chain" id="PRO_1000057581" description="Glutamyl-tRNA reductase">
    <location>
        <begin position="1"/>
        <end position="425"/>
    </location>
</feature>
<feature type="active site" description="Nucleophile" evidence="1">
    <location>
        <position position="50"/>
    </location>
</feature>
<feature type="binding site" evidence="1">
    <location>
        <begin position="49"/>
        <end position="52"/>
    </location>
    <ligand>
        <name>substrate</name>
    </ligand>
</feature>
<feature type="binding site" evidence="1">
    <location>
        <position position="107"/>
    </location>
    <ligand>
        <name>substrate</name>
    </ligand>
</feature>
<feature type="binding site" evidence="1">
    <location>
        <begin position="112"/>
        <end position="114"/>
    </location>
    <ligand>
        <name>substrate</name>
    </ligand>
</feature>
<feature type="binding site" evidence="1">
    <location>
        <position position="118"/>
    </location>
    <ligand>
        <name>substrate</name>
    </ligand>
</feature>
<feature type="binding site" evidence="1">
    <location>
        <begin position="187"/>
        <end position="192"/>
    </location>
    <ligand>
        <name>NADP(+)</name>
        <dbReference type="ChEBI" id="CHEBI:58349"/>
    </ligand>
</feature>
<feature type="site" description="Important for activity" evidence="1">
    <location>
        <position position="97"/>
    </location>
</feature>
<keyword id="KW-0521">NADP</keyword>
<keyword id="KW-0560">Oxidoreductase</keyword>
<keyword id="KW-0627">Porphyrin biosynthesis</keyword>
<reference key="1">
    <citation type="submission" date="2007-05" db="EMBL/GenBank/DDBJ databases">
        <title>Complete sequence of Pseudomonas putida F1.</title>
        <authorList>
            <consortium name="US DOE Joint Genome Institute"/>
            <person name="Copeland A."/>
            <person name="Lucas S."/>
            <person name="Lapidus A."/>
            <person name="Barry K."/>
            <person name="Detter J.C."/>
            <person name="Glavina del Rio T."/>
            <person name="Hammon N."/>
            <person name="Israni S."/>
            <person name="Dalin E."/>
            <person name="Tice H."/>
            <person name="Pitluck S."/>
            <person name="Chain P."/>
            <person name="Malfatti S."/>
            <person name="Shin M."/>
            <person name="Vergez L."/>
            <person name="Schmutz J."/>
            <person name="Larimer F."/>
            <person name="Land M."/>
            <person name="Hauser L."/>
            <person name="Kyrpides N."/>
            <person name="Lykidis A."/>
            <person name="Parales R."/>
            <person name="Richardson P."/>
        </authorList>
    </citation>
    <scope>NUCLEOTIDE SEQUENCE [LARGE SCALE GENOMIC DNA]</scope>
    <source>
        <strain>ATCC 700007 / DSM 6899 / JCM 31910 / BCRC 17059 / LMG 24140 / F1</strain>
    </source>
</reference>
<evidence type="ECO:0000255" key="1">
    <source>
        <dbReference type="HAMAP-Rule" id="MF_00087"/>
    </source>
</evidence>
<comment type="function">
    <text evidence="1">Catalyzes the NADPH-dependent reduction of glutamyl-tRNA(Glu) to glutamate 1-semialdehyde (GSA).</text>
</comment>
<comment type="catalytic activity">
    <reaction evidence="1">
        <text>(S)-4-amino-5-oxopentanoate + tRNA(Glu) + NADP(+) = L-glutamyl-tRNA(Glu) + NADPH + H(+)</text>
        <dbReference type="Rhea" id="RHEA:12344"/>
        <dbReference type="Rhea" id="RHEA-COMP:9663"/>
        <dbReference type="Rhea" id="RHEA-COMP:9680"/>
        <dbReference type="ChEBI" id="CHEBI:15378"/>
        <dbReference type="ChEBI" id="CHEBI:57501"/>
        <dbReference type="ChEBI" id="CHEBI:57783"/>
        <dbReference type="ChEBI" id="CHEBI:58349"/>
        <dbReference type="ChEBI" id="CHEBI:78442"/>
        <dbReference type="ChEBI" id="CHEBI:78520"/>
        <dbReference type="EC" id="1.2.1.70"/>
    </reaction>
</comment>
<comment type="pathway">
    <text evidence="1">Porphyrin-containing compound metabolism; protoporphyrin-IX biosynthesis; 5-aminolevulinate from L-glutamyl-tRNA(Glu): step 1/2.</text>
</comment>
<comment type="subunit">
    <text evidence="1">Homodimer.</text>
</comment>
<comment type="domain">
    <text evidence="1">Possesses an unusual extended V-shaped dimeric structure with each monomer consisting of three distinct domains arranged along a curved 'spinal' alpha-helix. The N-terminal catalytic domain specifically recognizes the glutamate moiety of the substrate. The second domain is the NADPH-binding domain, and the third C-terminal domain is responsible for dimerization.</text>
</comment>
<comment type="miscellaneous">
    <text evidence="1">During catalysis, the active site Cys acts as a nucleophile attacking the alpha-carbonyl group of tRNA-bound glutamate with the formation of a thioester intermediate between enzyme and glutamate, and the concomitant release of tRNA(Glu). The thioester intermediate is finally reduced by direct hydride transfer from NADPH, to form the product GSA.</text>
</comment>
<comment type="similarity">
    <text evidence="1">Belongs to the glutamyl-tRNA reductase family.</text>
</comment>
<organism>
    <name type="scientific">Pseudomonas putida (strain ATCC 700007 / DSM 6899 / JCM 31910 / BCRC 17059 / LMG 24140 / F1)</name>
    <dbReference type="NCBI Taxonomy" id="351746"/>
    <lineage>
        <taxon>Bacteria</taxon>
        <taxon>Pseudomonadati</taxon>
        <taxon>Pseudomonadota</taxon>
        <taxon>Gammaproteobacteria</taxon>
        <taxon>Pseudomonadales</taxon>
        <taxon>Pseudomonadaceae</taxon>
        <taxon>Pseudomonas</taxon>
    </lineage>
</organism>
<sequence>MAFLALGINHKTASVDVRERVAFTPEQLVDALQQLCRLTSSREAAILSTCNRSELYIEQDHLSADAVLQWLADYHRLSLDELRASAYVHEEHEAVKHMMRVASGLDSLVLGEPQILGQMKSAYAVAREAGTVGPLLGRLFQATFSAAKQVRTDTAIGENPVSVAFAAVSLAKQIFADLGRSQALLIGAGETITLVARHLHEQGVRRIVVANRTLERASILAEQFGAHAVLLADIPQELANSDIVISSTASQLPILGKGAVESALKQRRHKPIFMVDIAVPRDIETEVGELDDVYLYTVDDLHDVVAENLKSRQGAAQAAEELVSVGAEDFMLRLRELAAVDVLRAYRQQSERLRDEELQKALRLLANGGNPEDVLAQLARGLTNKLLHAPSVQLKKLSAEGRLDALAMAQELFALNEGSTDKSPQ</sequence>